<comment type="function">
    <text evidence="1">Heavy-metal-binding protein.</text>
</comment>
<comment type="similarity">
    <text evidence="6">Belongs to the HIPP family.</text>
</comment>
<sequence>MFDWIHGNSRLPIALSIVELLVDMDCKGCEKKVRRAISKLDGVDTVEIDVDRQKVTVTGYVDREEVLKMVKRTGRTAEYWPFPYNGYYGDYYTYPSQHLEQSDQKIYQTISYSGKYDFYDVDDFQNTNNSTINGYYPSSSQKVQPNIDENALHLFSDDNAHACTIM</sequence>
<dbReference type="EMBL" id="AL390921">
    <property type="status" value="NOT_ANNOTATED_CDS"/>
    <property type="molecule type" value="Genomic_DNA"/>
</dbReference>
<dbReference type="EMBL" id="CP002686">
    <property type="protein sequence ID" value="AEE79583.1"/>
    <property type="molecule type" value="Genomic_DNA"/>
</dbReference>
<dbReference type="RefSeq" id="NP_001118849.1">
    <property type="nucleotide sequence ID" value="NM_001125377.2"/>
</dbReference>
<dbReference type="SMR" id="B3H6D0"/>
<dbReference type="FunCoup" id="B3H6D0">
    <property type="interactions" value="71"/>
</dbReference>
<dbReference type="PaxDb" id="3702-AT3G56891.1"/>
<dbReference type="EnsemblPlants" id="AT3G56891.1">
    <property type="protein sequence ID" value="AT3G56891.1"/>
    <property type="gene ID" value="AT3G56891"/>
</dbReference>
<dbReference type="GeneID" id="6240272"/>
<dbReference type="Gramene" id="AT3G56891.1">
    <property type="protein sequence ID" value="AT3G56891.1"/>
    <property type="gene ID" value="AT3G56891"/>
</dbReference>
<dbReference type="KEGG" id="ath:AT3G56891"/>
<dbReference type="Araport" id="AT3G56891"/>
<dbReference type="TAIR" id="AT3G56891"/>
<dbReference type="eggNOG" id="KOG1603">
    <property type="taxonomic scope" value="Eukaryota"/>
</dbReference>
<dbReference type="HOGENOM" id="CLU_100095_0_1_1"/>
<dbReference type="InParanoid" id="B3H6D0"/>
<dbReference type="OMA" id="NAHACII"/>
<dbReference type="PhylomeDB" id="B3H6D0"/>
<dbReference type="PRO" id="PR:B3H6D0"/>
<dbReference type="Proteomes" id="UP000006548">
    <property type="component" value="Chromosome 3"/>
</dbReference>
<dbReference type="ExpressionAtlas" id="B3H6D0">
    <property type="expression patterns" value="baseline and differential"/>
</dbReference>
<dbReference type="GO" id="GO:0046872">
    <property type="term" value="F:metal ion binding"/>
    <property type="evidence" value="ECO:0007669"/>
    <property type="project" value="UniProtKB-KW"/>
</dbReference>
<dbReference type="CDD" id="cd00371">
    <property type="entry name" value="HMA"/>
    <property type="match status" value="1"/>
</dbReference>
<dbReference type="FunFam" id="3.30.70.100:FF:000008">
    <property type="entry name" value="Copper transport protein ATOX1"/>
    <property type="match status" value="1"/>
</dbReference>
<dbReference type="Gene3D" id="3.30.70.100">
    <property type="match status" value="1"/>
</dbReference>
<dbReference type="InterPro" id="IPR017969">
    <property type="entry name" value="Heavy-metal-associated_CS"/>
</dbReference>
<dbReference type="InterPro" id="IPR006121">
    <property type="entry name" value="HMA_dom"/>
</dbReference>
<dbReference type="InterPro" id="IPR036163">
    <property type="entry name" value="HMA_dom_sf"/>
</dbReference>
<dbReference type="PANTHER" id="PTHR22814">
    <property type="entry name" value="COPPER TRANSPORT PROTEIN ATOX1-RELATED"/>
    <property type="match status" value="1"/>
</dbReference>
<dbReference type="PANTHER" id="PTHR22814:SF306">
    <property type="entry name" value="HEAVY METAL-ASSOCIATED ISOPRENYLATED PLANT PROTEIN 45"/>
    <property type="match status" value="1"/>
</dbReference>
<dbReference type="Pfam" id="PF00403">
    <property type="entry name" value="HMA"/>
    <property type="match status" value="1"/>
</dbReference>
<dbReference type="SUPFAM" id="SSF55008">
    <property type="entry name" value="HMA, heavy metal-associated domain"/>
    <property type="match status" value="1"/>
</dbReference>
<dbReference type="PROSITE" id="PS01047">
    <property type="entry name" value="HMA_1"/>
    <property type="match status" value="1"/>
</dbReference>
<dbReference type="PROSITE" id="PS50846">
    <property type="entry name" value="HMA_2"/>
    <property type="match status" value="1"/>
</dbReference>
<evidence type="ECO:0000250" key="1">
    <source>
        <dbReference type="UniProtKB" id="Q9LZF1"/>
    </source>
</evidence>
<evidence type="ECO:0000250" key="2">
    <source>
        <dbReference type="UniProtKB" id="Q9SZN7"/>
    </source>
</evidence>
<evidence type="ECO:0000255" key="3">
    <source>
        <dbReference type="PROSITE-ProRule" id="PRU00280"/>
    </source>
</evidence>
<evidence type="ECO:0000303" key="4">
    <source>
    </source>
</evidence>
<evidence type="ECO:0000303" key="5">
    <source>
    </source>
</evidence>
<evidence type="ECO:0000305" key="6"/>
<evidence type="ECO:0000312" key="7">
    <source>
        <dbReference type="Araport" id="AT3G56891"/>
    </source>
</evidence>
<evidence type="ECO:0000312" key="8">
    <source>
        <dbReference type="EMBL" id="AL390921"/>
    </source>
</evidence>
<evidence type="ECO:0000312" key="9">
    <source>
        <dbReference type="Proteomes" id="UP000006548"/>
    </source>
</evidence>
<protein>
    <recommendedName>
        <fullName evidence="4 5">Heavy metal-associated isoprenylated plant protein 45</fullName>
        <shortName evidence="4 5">AtHIP45</shortName>
    </recommendedName>
</protein>
<reference key="1">
    <citation type="journal article" date="2000" name="Nature">
        <title>Sequence and analysis of chromosome 3 of the plant Arabidopsis thaliana.</title>
        <authorList>
            <person name="Salanoubat M."/>
            <person name="Lemcke K."/>
            <person name="Rieger M."/>
            <person name="Ansorge W."/>
            <person name="Unseld M."/>
            <person name="Fartmann B."/>
            <person name="Valle G."/>
            <person name="Bloecker H."/>
            <person name="Perez-Alonso M."/>
            <person name="Obermaier B."/>
            <person name="Delseny M."/>
            <person name="Boutry M."/>
            <person name="Grivell L.A."/>
            <person name="Mache R."/>
            <person name="Puigdomenech P."/>
            <person name="De Simone V."/>
            <person name="Choisne N."/>
            <person name="Artiguenave F."/>
            <person name="Robert C."/>
            <person name="Brottier P."/>
            <person name="Wincker P."/>
            <person name="Cattolico L."/>
            <person name="Weissenbach J."/>
            <person name="Saurin W."/>
            <person name="Quetier F."/>
            <person name="Schaefer M."/>
            <person name="Mueller-Auer S."/>
            <person name="Gabel C."/>
            <person name="Fuchs M."/>
            <person name="Benes V."/>
            <person name="Wurmbach E."/>
            <person name="Drzonek H."/>
            <person name="Erfle H."/>
            <person name="Jordan N."/>
            <person name="Bangert S."/>
            <person name="Wiedelmann R."/>
            <person name="Kranz H."/>
            <person name="Voss H."/>
            <person name="Holland R."/>
            <person name="Brandt P."/>
            <person name="Nyakatura G."/>
            <person name="Vezzi A."/>
            <person name="D'Angelo M."/>
            <person name="Pallavicini A."/>
            <person name="Toppo S."/>
            <person name="Simionati B."/>
            <person name="Conrad A."/>
            <person name="Hornischer K."/>
            <person name="Kauer G."/>
            <person name="Loehnert T.-H."/>
            <person name="Nordsiek G."/>
            <person name="Reichelt J."/>
            <person name="Scharfe M."/>
            <person name="Schoen O."/>
            <person name="Bargues M."/>
            <person name="Terol J."/>
            <person name="Climent J."/>
            <person name="Navarro P."/>
            <person name="Collado C."/>
            <person name="Perez-Perez A."/>
            <person name="Ottenwaelder B."/>
            <person name="Duchemin D."/>
            <person name="Cooke R."/>
            <person name="Laudie M."/>
            <person name="Berger-Llauro C."/>
            <person name="Purnelle B."/>
            <person name="Masuy D."/>
            <person name="de Haan M."/>
            <person name="Maarse A.C."/>
            <person name="Alcaraz J.-P."/>
            <person name="Cottet A."/>
            <person name="Casacuberta E."/>
            <person name="Monfort A."/>
            <person name="Argiriou A."/>
            <person name="Flores M."/>
            <person name="Liguori R."/>
            <person name="Vitale D."/>
            <person name="Mannhaupt G."/>
            <person name="Haase D."/>
            <person name="Schoof H."/>
            <person name="Rudd S."/>
            <person name="Zaccaria P."/>
            <person name="Mewes H.-W."/>
            <person name="Mayer K.F.X."/>
            <person name="Kaul S."/>
            <person name="Town C.D."/>
            <person name="Koo H.L."/>
            <person name="Tallon L.J."/>
            <person name="Jenkins J."/>
            <person name="Rooney T."/>
            <person name="Rizzo M."/>
            <person name="Walts A."/>
            <person name="Utterback T."/>
            <person name="Fujii C.Y."/>
            <person name="Shea T.P."/>
            <person name="Creasy T.H."/>
            <person name="Haas B."/>
            <person name="Maiti R."/>
            <person name="Wu D."/>
            <person name="Peterson J."/>
            <person name="Van Aken S."/>
            <person name="Pai G."/>
            <person name="Militscher J."/>
            <person name="Sellers P."/>
            <person name="Gill J.E."/>
            <person name="Feldblyum T.V."/>
            <person name="Preuss D."/>
            <person name="Lin X."/>
            <person name="Nierman W.C."/>
            <person name="Salzberg S.L."/>
            <person name="White O."/>
            <person name="Venter J.C."/>
            <person name="Fraser C.M."/>
            <person name="Kaneko T."/>
            <person name="Nakamura Y."/>
            <person name="Sato S."/>
            <person name="Kato T."/>
            <person name="Asamizu E."/>
            <person name="Sasamoto S."/>
            <person name="Kimura T."/>
            <person name="Idesawa K."/>
            <person name="Kawashima K."/>
            <person name="Kishida Y."/>
            <person name="Kiyokawa C."/>
            <person name="Kohara M."/>
            <person name="Matsumoto M."/>
            <person name="Matsuno A."/>
            <person name="Muraki A."/>
            <person name="Nakayama S."/>
            <person name="Nakazaki N."/>
            <person name="Shinpo S."/>
            <person name="Takeuchi C."/>
            <person name="Wada T."/>
            <person name="Watanabe A."/>
            <person name="Yamada M."/>
            <person name="Yasuda M."/>
            <person name="Tabata S."/>
        </authorList>
    </citation>
    <scope>NUCLEOTIDE SEQUENCE [LARGE SCALE GENOMIC DNA]</scope>
    <source>
        <strain>cv. Columbia</strain>
    </source>
</reference>
<reference key="2">
    <citation type="journal article" date="2017" name="Plant J.">
        <title>Araport11: a complete reannotation of the Arabidopsis thaliana reference genome.</title>
        <authorList>
            <person name="Cheng C.Y."/>
            <person name="Krishnakumar V."/>
            <person name="Chan A.P."/>
            <person name="Thibaud-Nissen F."/>
            <person name="Schobel S."/>
            <person name="Town C.D."/>
        </authorList>
    </citation>
    <scope>GENOME REANNOTATION</scope>
    <source>
        <strain>cv. Columbia</strain>
    </source>
</reference>
<reference key="3">
    <citation type="journal article" date="2010" name="Metallomics">
        <title>Metallochaperone-like genes in Arabidopsis thaliana.</title>
        <authorList>
            <person name="Tehseen M."/>
            <person name="Cairns N."/>
            <person name="Sherson S."/>
            <person name="Cobbett C.S."/>
        </authorList>
    </citation>
    <scope>GENE FAMILY</scope>
    <scope>NOMENCLATURE</scope>
</reference>
<reference key="4">
    <citation type="journal article" date="2013" name="FEBS J.">
        <title>Heavy metal-associated isoprenylated plant protein (HIPP): characterization of a family of proteins exclusive to plants.</title>
        <authorList>
            <person name="de Abreu-Neto J.B."/>
            <person name="Turchetto-Zolet A.C."/>
            <person name="de Oliveira L.F."/>
            <person name="Zanettini M.H."/>
            <person name="Margis-Pinheiro M."/>
        </authorList>
    </citation>
    <scope>GENE FAMILY</scope>
    <scope>NOMENCLATURE</scope>
</reference>
<feature type="chain" id="PRO_5002787902" description="Heavy metal-associated isoprenylated plant protein 45">
    <location>
        <begin position="1"/>
        <end position="163"/>
    </location>
</feature>
<feature type="propeptide" id="PRO_0000437863" description="Removed in mature form" evidence="6">
    <location>
        <begin position="164"/>
        <end position="166"/>
    </location>
</feature>
<feature type="domain" description="HMA" evidence="3">
    <location>
        <begin position="15"/>
        <end position="78"/>
    </location>
</feature>
<feature type="binding site" evidence="3">
    <location>
        <position position="26"/>
    </location>
    <ligand>
        <name>a metal cation</name>
        <dbReference type="ChEBI" id="CHEBI:25213"/>
    </ligand>
</feature>
<feature type="binding site" evidence="3">
    <location>
        <position position="29"/>
    </location>
    <ligand>
        <name>a metal cation</name>
        <dbReference type="ChEBI" id="CHEBI:25213"/>
    </ligand>
</feature>
<feature type="modified residue" description="Cysteine methyl ester" evidence="2">
    <location>
        <position position="163"/>
    </location>
</feature>
<feature type="lipid moiety-binding region" description="S-farnesyl cysteine" evidence="2">
    <location>
        <position position="163"/>
    </location>
</feature>
<keyword id="KW-0449">Lipoprotein</keyword>
<keyword id="KW-0479">Metal-binding</keyword>
<keyword id="KW-0488">Methylation</keyword>
<keyword id="KW-0636">Prenylation</keyword>
<keyword id="KW-1185">Reference proteome</keyword>
<name>HIP45_ARATH</name>
<organism evidence="9">
    <name type="scientific">Arabidopsis thaliana</name>
    <name type="common">Mouse-ear cress</name>
    <dbReference type="NCBI Taxonomy" id="3702"/>
    <lineage>
        <taxon>Eukaryota</taxon>
        <taxon>Viridiplantae</taxon>
        <taxon>Streptophyta</taxon>
        <taxon>Embryophyta</taxon>
        <taxon>Tracheophyta</taxon>
        <taxon>Spermatophyta</taxon>
        <taxon>Magnoliopsida</taxon>
        <taxon>eudicotyledons</taxon>
        <taxon>Gunneridae</taxon>
        <taxon>Pentapetalae</taxon>
        <taxon>rosids</taxon>
        <taxon>malvids</taxon>
        <taxon>Brassicales</taxon>
        <taxon>Brassicaceae</taxon>
        <taxon>Camelineae</taxon>
        <taxon>Arabidopsis</taxon>
    </lineage>
</organism>
<proteinExistence type="inferred from homology"/>
<accession>B3H6D0</accession>
<gene>
    <name evidence="4 5" type="primary">HIPP45</name>
    <name evidence="7" type="ordered locus">At3g56891</name>
    <name evidence="8" type="ORF">T8M16</name>
</gene>